<protein>
    <recommendedName>
        <fullName>Glycosyltransferase 25 family member</fullName>
        <ecNumber>2.-.-.-</ecNumber>
    </recommendedName>
</protein>
<evidence type="ECO:0000255" key="1"/>
<evidence type="ECO:0000256" key="2">
    <source>
        <dbReference type="SAM" id="MobiDB-lite"/>
    </source>
</evidence>
<evidence type="ECO:0000305" key="3"/>
<keyword id="KW-0256">Endoplasmic reticulum</keyword>
<keyword id="KW-0325">Glycoprotein</keyword>
<keyword id="KW-0328">Glycosyltransferase</keyword>
<keyword id="KW-1185">Reference proteome</keyword>
<keyword id="KW-0732">Signal</keyword>
<keyword id="KW-0808">Transferase</keyword>
<organism>
    <name type="scientific">Anopheles gambiae</name>
    <name type="common">African malaria mosquito</name>
    <dbReference type="NCBI Taxonomy" id="7165"/>
    <lineage>
        <taxon>Eukaryota</taxon>
        <taxon>Metazoa</taxon>
        <taxon>Ecdysozoa</taxon>
        <taxon>Arthropoda</taxon>
        <taxon>Hexapoda</taxon>
        <taxon>Insecta</taxon>
        <taxon>Pterygota</taxon>
        <taxon>Neoptera</taxon>
        <taxon>Endopterygota</taxon>
        <taxon>Diptera</taxon>
        <taxon>Nematocera</taxon>
        <taxon>Culicoidea</taxon>
        <taxon>Culicidae</taxon>
        <taxon>Anophelinae</taxon>
        <taxon>Anopheles</taxon>
    </lineage>
</organism>
<feature type="signal peptide" evidence="1">
    <location>
        <begin position="1"/>
        <end position="13"/>
    </location>
</feature>
<feature type="chain" id="PRO_0000309548" description="Glycosyltransferase 25 family member">
    <location>
        <begin position="14"/>
        <end position="592"/>
    </location>
</feature>
<feature type="region of interest" description="Disordered" evidence="2">
    <location>
        <begin position="552"/>
        <end position="592"/>
    </location>
</feature>
<feature type="short sequence motif" description="Prevents secretion from ER" evidence="1">
    <location>
        <begin position="589"/>
        <end position="592"/>
    </location>
</feature>
<feature type="compositionally biased region" description="Basic and acidic residues" evidence="2">
    <location>
        <begin position="552"/>
        <end position="563"/>
    </location>
</feature>
<feature type="compositionally biased region" description="Basic and acidic residues" evidence="2">
    <location>
        <begin position="579"/>
        <end position="592"/>
    </location>
</feature>
<feature type="glycosylation site" description="N-linked (GlcNAc...) asparagine" evidence="1">
    <location>
        <position position="249"/>
    </location>
</feature>
<feature type="glycosylation site" description="N-linked (GlcNAc...) asparagine" evidence="1">
    <location>
        <position position="510"/>
    </location>
</feature>
<proteinExistence type="inferred from homology"/>
<dbReference type="EC" id="2.-.-.-"/>
<dbReference type="EMBL" id="AAAB01008986">
    <property type="protein sequence ID" value="EAA00118.3"/>
    <property type="status" value="ALT_SEQ"/>
    <property type="molecule type" value="Genomic_DNA"/>
</dbReference>
<dbReference type="RefSeq" id="XP_320324.3">
    <property type="nucleotide sequence ID" value="XM_320324.4"/>
</dbReference>
<dbReference type="SMR" id="Q7Q021"/>
<dbReference type="FunCoup" id="Q7Q021">
    <property type="interactions" value="414"/>
</dbReference>
<dbReference type="STRING" id="7165.Q7Q021"/>
<dbReference type="PaxDb" id="7165-AGAP012208-PA"/>
<dbReference type="GeneID" id="1280478"/>
<dbReference type="KEGG" id="aga:1280478"/>
<dbReference type="VEuPathDB" id="VectorBase:AGAMI1_014426"/>
<dbReference type="VEuPathDB" id="VectorBase:AGAP012208"/>
<dbReference type="eggNOG" id="KOG4179">
    <property type="taxonomic scope" value="Eukaryota"/>
</dbReference>
<dbReference type="HOGENOM" id="CLU_024037_2_0_1"/>
<dbReference type="InParanoid" id="Q7Q021"/>
<dbReference type="Proteomes" id="UP000007062">
    <property type="component" value="Chromosome 3L"/>
</dbReference>
<dbReference type="GO" id="GO:0005788">
    <property type="term" value="C:endoplasmic reticulum lumen"/>
    <property type="evidence" value="ECO:0007669"/>
    <property type="project" value="UniProtKB-SubCell"/>
</dbReference>
<dbReference type="GO" id="GO:0050211">
    <property type="term" value="F:procollagen galactosyltransferase activity"/>
    <property type="evidence" value="ECO:0000318"/>
    <property type="project" value="GO_Central"/>
</dbReference>
<dbReference type="CDD" id="cd06532">
    <property type="entry name" value="Glyco_transf_25"/>
    <property type="match status" value="1"/>
</dbReference>
<dbReference type="Gene3D" id="3.90.550.10">
    <property type="entry name" value="Spore Coat Polysaccharide Biosynthesis Protein SpsA, Chain A"/>
    <property type="match status" value="1"/>
</dbReference>
<dbReference type="InterPro" id="IPR050757">
    <property type="entry name" value="Collagen_mod_GT25"/>
</dbReference>
<dbReference type="InterPro" id="IPR002654">
    <property type="entry name" value="Glyco_trans_25"/>
</dbReference>
<dbReference type="InterPro" id="IPR029044">
    <property type="entry name" value="Nucleotide-diphossugar_trans"/>
</dbReference>
<dbReference type="PANTHER" id="PTHR10730:SF53">
    <property type="entry name" value="GLYCOSYLTRANSFERASE 25 FAMILY MEMBER"/>
    <property type="match status" value="1"/>
</dbReference>
<dbReference type="PANTHER" id="PTHR10730">
    <property type="entry name" value="PROCOLLAGEN-LYSINE,2-OXOGLUTARATE 5-DIOXYGENASE/GLYCOSYLTRANSFERASE 25 FAMILY MEMBER"/>
    <property type="match status" value="1"/>
</dbReference>
<dbReference type="Pfam" id="PF13704">
    <property type="entry name" value="Glyco_tranf_2_4"/>
    <property type="match status" value="1"/>
</dbReference>
<dbReference type="Pfam" id="PF01755">
    <property type="entry name" value="Glyco_transf_25"/>
    <property type="match status" value="1"/>
</dbReference>
<dbReference type="SUPFAM" id="SSF53448">
    <property type="entry name" value="Nucleotide-diphospho-sugar transferases"/>
    <property type="match status" value="1"/>
</dbReference>
<reference key="1">
    <citation type="journal article" date="2002" name="Science">
        <title>The genome sequence of the malaria mosquito Anopheles gambiae.</title>
        <authorList>
            <person name="Holt R.A."/>
            <person name="Subramanian G.M."/>
            <person name="Halpern A."/>
            <person name="Sutton G.G."/>
            <person name="Charlab R."/>
            <person name="Nusskern D.R."/>
            <person name="Wincker P."/>
            <person name="Clark A.G."/>
            <person name="Ribeiro J.M.C."/>
            <person name="Wides R."/>
            <person name="Salzberg S.L."/>
            <person name="Loftus B.J."/>
            <person name="Yandell M.D."/>
            <person name="Majoros W.H."/>
            <person name="Rusch D.B."/>
            <person name="Lai Z."/>
            <person name="Kraft C.L."/>
            <person name="Abril J.F."/>
            <person name="Anthouard V."/>
            <person name="Arensburger P."/>
            <person name="Atkinson P.W."/>
            <person name="Baden H."/>
            <person name="de Berardinis V."/>
            <person name="Baldwin D."/>
            <person name="Benes V."/>
            <person name="Biedler J."/>
            <person name="Blass C."/>
            <person name="Bolanos R."/>
            <person name="Boscus D."/>
            <person name="Barnstead M."/>
            <person name="Cai S."/>
            <person name="Center A."/>
            <person name="Chaturverdi K."/>
            <person name="Christophides G.K."/>
            <person name="Chrystal M.A.M."/>
            <person name="Clamp M."/>
            <person name="Cravchik A."/>
            <person name="Curwen V."/>
            <person name="Dana A."/>
            <person name="Delcher A."/>
            <person name="Dew I."/>
            <person name="Evans C.A."/>
            <person name="Flanigan M."/>
            <person name="Grundschober-Freimoser A."/>
            <person name="Friedli L."/>
            <person name="Gu Z."/>
            <person name="Guan P."/>
            <person name="Guigo R."/>
            <person name="Hillenmeyer M.E."/>
            <person name="Hladun S.L."/>
            <person name="Hogan J.R."/>
            <person name="Hong Y.S."/>
            <person name="Hoover J."/>
            <person name="Jaillon O."/>
            <person name="Ke Z."/>
            <person name="Kodira C.D."/>
            <person name="Kokoza E."/>
            <person name="Koutsos A."/>
            <person name="Letunic I."/>
            <person name="Levitsky A.A."/>
            <person name="Liang Y."/>
            <person name="Lin J.-J."/>
            <person name="Lobo N.F."/>
            <person name="Lopez J.R."/>
            <person name="Malek J.A."/>
            <person name="McIntosh T.C."/>
            <person name="Meister S."/>
            <person name="Miller J.R."/>
            <person name="Mobarry C."/>
            <person name="Mongin E."/>
            <person name="Murphy S.D."/>
            <person name="O'Brochta D.A."/>
            <person name="Pfannkoch C."/>
            <person name="Qi R."/>
            <person name="Regier M.A."/>
            <person name="Remington K."/>
            <person name="Shao H."/>
            <person name="Sharakhova M.V."/>
            <person name="Sitter C.D."/>
            <person name="Shetty J."/>
            <person name="Smith T.J."/>
            <person name="Strong R."/>
            <person name="Sun J."/>
            <person name="Thomasova D."/>
            <person name="Ton L.Q."/>
            <person name="Topalis P."/>
            <person name="Tu Z.J."/>
            <person name="Unger M.F."/>
            <person name="Walenz B."/>
            <person name="Wang A.H."/>
            <person name="Wang J."/>
            <person name="Wang M."/>
            <person name="Wang X."/>
            <person name="Woodford K.J."/>
            <person name="Wortman J.R."/>
            <person name="Wu M."/>
            <person name="Yao A."/>
            <person name="Zdobnov E.M."/>
            <person name="Zhang H."/>
            <person name="Zhao Q."/>
            <person name="Zhao S."/>
            <person name="Zhu S.C."/>
            <person name="Zhimulev I."/>
            <person name="Coluzzi M."/>
            <person name="della Torre A."/>
            <person name="Roth C.W."/>
            <person name="Louis C."/>
            <person name="Kalush F."/>
            <person name="Mural R.J."/>
            <person name="Myers E.W."/>
            <person name="Adams M.D."/>
            <person name="Smith H.O."/>
            <person name="Broder S."/>
            <person name="Gardner M.J."/>
            <person name="Fraser C.M."/>
            <person name="Birney E."/>
            <person name="Bork P."/>
            <person name="Brey P.T."/>
            <person name="Venter J.C."/>
            <person name="Weissenbach J."/>
            <person name="Kafatos F.C."/>
            <person name="Collins F.H."/>
            <person name="Hoffman S.L."/>
        </authorList>
    </citation>
    <scope>NUCLEOTIDE SEQUENCE [LARGE SCALE GENOMIC DNA]</scope>
    <source>
        <strain>PEST</strain>
    </source>
</reference>
<gene>
    <name type="ORF">AGAP012208</name>
</gene>
<comment type="subcellular location">
    <subcellularLocation>
        <location evidence="3">Endoplasmic reticulum lumen</location>
    </subcellularLocation>
</comment>
<comment type="similarity">
    <text evidence="3">Belongs to the glycosyltransferase 25 family.</text>
</comment>
<comment type="sequence caution" evidence="3">
    <conflict type="erroneous gene model prediction">
        <sequence resource="EMBL-CDS" id="EAA00118"/>
    </conflict>
</comment>
<name>GLT25_ANOGA</name>
<accession>Q7Q021</accession>
<sequence length="592" mass="68811">MLALLLTTTIVSGDNQIELTEQLPTVMVAVLVRNKAHTLPYFFSYLEDLDYPKDRMSLWIRSDHNEDRSIEITKAWLKRTSSLYHSVDFKYRSERGKRESEKTSTHWNEERFSDVIRLKQDALQAARMMWADYIFFIDADVFLTNSNTLGKLIERKLPIVAPMLVSDGLYSNFWCGMTSDYYYQRTDDYKKILNYDQIGQWPVPMVHTAVLVSLNIAQTRQLTFERKNLPVGRYDGPVDDIIIFAMSANYSGIPMYVCNELLYGYIMVPLEAGETVPGKDLEQLTNVLSYIVNEYGALSLKQDLSRFVADVPKDKLSLSHIYMINLERRTERRTKMLKHFDLLGLDVEHFPAVDGKQLSDKKVYDMGIRFLPGYADPFHKRPMTMGEIGCFLSHYNIWERMVRLNQQEVLVLEDDIRFEPFFRRRAYGVLADARRIGGWDLIYFGRKRLQEEDEKWIDGSEYLVKAGYSYWTLGYVITLEGAKKLLREQPLSKLLPVDEYLPIMFDNHPNESWTSHFRDRTLSAWSAAPLLLYPTHYTGDEGYISDTEDSLRIQEPKKGDKEQLPNAPALLSESGIGQGEHDLETKNRRSEL</sequence>